<keyword id="KW-0175">Coiled coil</keyword>
<keyword id="KW-0539">Nucleus</keyword>
<keyword id="KW-0597">Phosphoprotein</keyword>
<keyword id="KW-1185">Reference proteome</keyword>
<dbReference type="EMBL" id="AE014297">
    <property type="protein sequence ID" value="AAF54043.1"/>
    <property type="molecule type" value="Genomic_DNA"/>
</dbReference>
<dbReference type="EMBL" id="AY051854">
    <property type="protein sequence ID" value="AAK93278.1"/>
    <property type="molecule type" value="mRNA"/>
</dbReference>
<dbReference type="RefSeq" id="NP_649710.1">
    <property type="nucleotide sequence ID" value="NM_141453.5"/>
</dbReference>
<dbReference type="SMR" id="Q9VI82"/>
<dbReference type="BioGRID" id="66065">
    <property type="interactions" value="18"/>
</dbReference>
<dbReference type="FunCoup" id="Q9VI82">
    <property type="interactions" value="2052"/>
</dbReference>
<dbReference type="IntAct" id="Q9VI82">
    <property type="interactions" value="64"/>
</dbReference>
<dbReference type="STRING" id="7227.FBpp0081117"/>
<dbReference type="iPTMnet" id="Q9VI82"/>
<dbReference type="PaxDb" id="7227-FBpp0081117"/>
<dbReference type="DNASU" id="40870"/>
<dbReference type="EnsemblMetazoa" id="FBtr0081599">
    <property type="protein sequence ID" value="FBpp0081117"/>
    <property type="gene ID" value="FBgn0037489"/>
</dbReference>
<dbReference type="GeneID" id="40870"/>
<dbReference type="KEGG" id="dme:Dmel_CG1234"/>
<dbReference type="UCSC" id="CG1234-RA">
    <property type="organism name" value="d. melanogaster"/>
</dbReference>
<dbReference type="AGR" id="FB:FBgn0037489"/>
<dbReference type="CTD" id="40870"/>
<dbReference type="FlyBase" id="FBgn0037489">
    <property type="gene designation" value="Noc3"/>
</dbReference>
<dbReference type="VEuPathDB" id="VectorBase:FBgn0037489"/>
<dbReference type="eggNOG" id="KOG2153">
    <property type="taxonomic scope" value="Eukaryota"/>
</dbReference>
<dbReference type="GeneTree" id="ENSGT00390000008540"/>
<dbReference type="HOGENOM" id="CLU_012441_2_0_1"/>
<dbReference type="InParanoid" id="Q9VI82"/>
<dbReference type="OMA" id="HYCPQVR"/>
<dbReference type="OrthoDB" id="10263597at2759"/>
<dbReference type="PhylomeDB" id="Q9VI82"/>
<dbReference type="BioGRID-ORCS" id="40870">
    <property type="hits" value="1 hit in 1 CRISPR screen"/>
</dbReference>
<dbReference type="GenomeRNAi" id="40870"/>
<dbReference type="PRO" id="PR:Q9VI82"/>
<dbReference type="Proteomes" id="UP000000803">
    <property type="component" value="Chromosome 3R"/>
</dbReference>
<dbReference type="Bgee" id="FBgn0037489">
    <property type="expression patterns" value="Expressed in posterior terminal follicle cell in ovary and 130 other cell types or tissues"/>
</dbReference>
<dbReference type="GO" id="GO:0030691">
    <property type="term" value="C:Noc2p-Noc3p complex"/>
    <property type="evidence" value="ECO:0000250"/>
    <property type="project" value="FlyBase"/>
</dbReference>
<dbReference type="GO" id="GO:0005730">
    <property type="term" value="C:nucleolus"/>
    <property type="evidence" value="ECO:0000318"/>
    <property type="project" value="GO_Central"/>
</dbReference>
<dbReference type="GO" id="GO:0005634">
    <property type="term" value="C:nucleus"/>
    <property type="evidence" value="ECO:0000250"/>
    <property type="project" value="UniProtKB"/>
</dbReference>
<dbReference type="GO" id="GO:0003682">
    <property type="term" value="F:chromatin binding"/>
    <property type="evidence" value="ECO:0000318"/>
    <property type="project" value="GO_Central"/>
</dbReference>
<dbReference type="GO" id="GO:0006270">
    <property type="term" value="P:DNA replication initiation"/>
    <property type="evidence" value="ECO:0000318"/>
    <property type="project" value="GO_Central"/>
</dbReference>
<dbReference type="InterPro" id="IPR016024">
    <property type="entry name" value="ARM-type_fold"/>
</dbReference>
<dbReference type="InterPro" id="IPR005612">
    <property type="entry name" value="CCAAT-binding_factor"/>
</dbReference>
<dbReference type="InterPro" id="IPR011501">
    <property type="entry name" value="Noc3_N"/>
</dbReference>
<dbReference type="InterPro" id="IPR016903">
    <property type="entry name" value="Nucleolar_cplx-assoc_3"/>
</dbReference>
<dbReference type="PANTHER" id="PTHR14428">
    <property type="entry name" value="NUCLEOLAR COMPLEX PROTEIN 3"/>
    <property type="match status" value="1"/>
</dbReference>
<dbReference type="PANTHER" id="PTHR14428:SF5">
    <property type="entry name" value="NUCLEOLAR COMPLEX PROTEIN 3 HOMOLOG"/>
    <property type="match status" value="1"/>
</dbReference>
<dbReference type="Pfam" id="PF03914">
    <property type="entry name" value="CBF"/>
    <property type="match status" value="1"/>
</dbReference>
<dbReference type="Pfam" id="PF07540">
    <property type="entry name" value="NOC3p"/>
    <property type="match status" value="1"/>
</dbReference>
<dbReference type="PIRSF" id="PIRSF028977">
    <property type="entry name" value="Nucleolar_complex_p3"/>
    <property type="match status" value="1"/>
</dbReference>
<dbReference type="SUPFAM" id="SSF48371">
    <property type="entry name" value="ARM repeat"/>
    <property type="match status" value="1"/>
</dbReference>
<proteinExistence type="evidence at protein level"/>
<organism evidence="10">
    <name type="scientific">Drosophila melanogaster</name>
    <name type="common">Fruit fly</name>
    <dbReference type="NCBI Taxonomy" id="7227"/>
    <lineage>
        <taxon>Eukaryota</taxon>
        <taxon>Metazoa</taxon>
        <taxon>Ecdysozoa</taxon>
        <taxon>Arthropoda</taxon>
        <taxon>Hexapoda</taxon>
        <taxon>Insecta</taxon>
        <taxon>Pterygota</taxon>
        <taxon>Neoptera</taxon>
        <taxon>Endopterygota</taxon>
        <taxon>Diptera</taxon>
        <taxon>Brachycera</taxon>
        <taxon>Muscomorpha</taxon>
        <taxon>Ephydroidea</taxon>
        <taxon>Drosophilidae</taxon>
        <taxon>Drosophila</taxon>
        <taxon>Sophophora</taxon>
    </lineage>
</organism>
<accession>Q9VI82</accession>
<name>NOC3L_DROME</name>
<feature type="chain" id="PRO_0000173481" description="Nucleolar complex protein 3">
    <location>
        <begin position="1"/>
        <end position="822"/>
    </location>
</feature>
<feature type="region of interest" description="Disordered" evidence="4">
    <location>
        <begin position="1"/>
        <end position="86"/>
    </location>
</feature>
<feature type="region of interest" description="Disordered" evidence="4">
    <location>
        <begin position="106"/>
        <end position="142"/>
    </location>
</feature>
<feature type="region of interest" description="Disordered" evidence="4">
    <location>
        <begin position="172"/>
        <end position="199"/>
    </location>
</feature>
<feature type="coiled-coil region" evidence="2">
    <location>
        <begin position="445"/>
        <end position="509"/>
    </location>
</feature>
<feature type="short sequence motif" description="Nuclear localization signal" evidence="3">
    <location>
        <begin position="41"/>
        <end position="48"/>
    </location>
</feature>
<feature type="compositionally biased region" description="Basic residues" evidence="4">
    <location>
        <begin position="13"/>
        <end position="23"/>
    </location>
</feature>
<feature type="compositionally biased region" description="Basic and acidic residues" evidence="4">
    <location>
        <begin position="35"/>
        <end position="45"/>
    </location>
</feature>
<feature type="compositionally biased region" description="Acidic residues" evidence="4">
    <location>
        <begin position="76"/>
        <end position="86"/>
    </location>
</feature>
<feature type="compositionally biased region" description="Polar residues" evidence="4">
    <location>
        <begin position="116"/>
        <end position="126"/>
    </location>
</feature>
<feature type="compositionally biased region" description="Acidic residues" evidence="4">
    <location>
        <begin position="181"/>
        <end position="199"/>
    </location>
</feature>
<feature type="modified residue" description="Phosphoserine" evidence="5">
    <location>
        <position position="187"/>
    </location>
</feature>
<feature type="modified residue" description="Phosphothreonine" evidence="5">
    <location>
        <position position="193"/>
    </location>
</feature>
<feature type="modified residue" description="Phosphoserine" evidence="5">
    <location>
        <position position="198"/>
    </location>
</feature>
<protein>
    <recommendedName>
        <fullName evidence="7">Nucleolar complex protein 3</fullName>
    </recommendedName>
    <alternativeName>
        <fullName>NOC3-like protein</fullName>
    </alternativeName>
    <alternativeName>
        <fullName>Nucleolar complex-associated protein 3-like protein</fullName>
    </alternativeName>
</protein>
<sequence>MGTKKVKISSVKRAAHLKSKKTPLSKQQQQKQKQKRDQLKSKREQGQNIFSQKARKRDNLAQRKKHNKLASLGLDPLEEDNEDGDDEMLENVADMLDGDDLALLQANKRKRKAKTTGENDPDQGQSIGLERAYASDTKKEQDAQKIKLDLLPIKSRDGQIITRTTEVDYIPKPKQKKKNEEEEEDDSEEDGDTEYEDSDDDVVNDVEAATAAPVQKLISTTDLLIARQQEIERQKYRIGIICSGLLEKPEDKMRNFHALYELMDEINPASRQANLMAVRKLAIISVTEIFKDILPEYRVGQVDTKMQTLRKATLDRVTFENALLQQFKKFLQKLEQITAQVNRRGGLRTPQTVKLATVAVQCMCDLLVAHPYFNYVQNIAQLLVYMLNCNYAEMRTAVHQCFRTVFSNDKRLEMTLFIVRRINHLIKTKQNNVHVECITCLMGLKIKNVNLDAEKENELKQKKLESHRQRLLSLSKKERKRRKKLTEVNRELEETRAEENKQAKHQKLTEIIKMVFTIYFRVLKNDPTSRVLSAILEGLAEFAHVINLDFFSDLIDVLNRILEDQDELGYRERLHCVQTIFVILSGQGEVLNIDPIRFYQHFYRNMLAVQAGKNHDDFAIILRTLDEVLVKRRRNMSQQRLMAFMKRLLTGSLHLLHNGTLATLGTIKQTFQLTSVLDNLLDTDTTIGSGRYDPELDDPEYCNAASTALYELALLARHYHPTVRRMAVHIAHGVPATGEGALPTEIGKLTSHELFTQFDSTQMAFNPTIPLPKAGQPKLKRGKHLYIRSDFKQEYGKLLQQGKVSQTKDKQTLQIDFFSALQ</sequence>
<gene>
    <name evidence="7 9" type="primary">Noc3</name>
    <name evidence="9" type="ORF">CG1234</name>
</gene>
<evidence type="ECO:0000250" key="1">
    <source>
        <dbReference type="UniProtKB" id="Q8VI84"/>
    </source>
</evidence>
<evidence type="ECO:0000255" key="2"/>
<evidence type="ECO:0000255" key="3">
    <source>
        <dbReference type="PROSITE-ProRule" id="PRU00768"/>
    </source>
</evidence>
<evidence type="ECO:0000256" key="4">
    <source>
        <dbReference type="SAM" id="MobiDB-lite"/>
    </source>
</evidence>
<evidence type="ECO:0000269" key="5">
    <source>
    </source>
</evidence>
<evidence type="ECO:0000269" key="6">
    <source>
    </source>
</evidence>
<evidence type="ECO:0000303" key="7">
    <source>
    </source>
</evidence>
<evidence type="ECO:0000305" key="8"/>
<evidence type="ECO:0000312" key="9">
    <source>
        <dbReference type="FlyBase" id="FBgn0037489"/>
    </source>
</evidence>
<evidence type="ECO:0000312" key="10">
    <source>
        <dbReference type="Proteomes" id="UP000000803"/>
    </source>
</evidence>
<comment type="subcellular location">
    <subcellularLocation>
        <location evidence="1">Nucleus</location>
        <location evidence="1">Nucleolus</location>
    </subcellularLocation>
</comment>
<comment type="disruption phenotype">
    <text evidence="6">Ubiquitous RNAi-mediated knock-down is lethal between first and second instar with reduced larval size (PubMed:36314272). Conditional RNAi-mediated knock-down in proliferating cells of the eye and antenna imaginal discs is viable but results in small eye size and disorganized ommatidia, possibly due to excessive apoptosis (PubMed:36314272). Conditional RNAi-mediated knock-down in cells of the prothoracic gland impedes pupation, probably due to reduced ecdysone hormone levels (PubMed:36314272). Conditional RNAi-mediated knock-down in fat body cells delays larval development, induces dyslipidemia, and is lethal between late third instar and pupal stages (PubMed:36314272).</text>
</comment>
<comment type="similarity">
    <text evidence="8">Belongs to the CBF/MAK21 family.</text>
</comment>
<reference key="1">
    <citation type="journal article" date="2000" name="Science">
        <title>The genome sequence of Drosophila melanogaster.</title>
        <authorList>
            <person name="Adams M.D."/>
            <person name="Celniker S.E."/>
            <person name="Holt R.A."/>
            <person name="Evans C.A."/>
            <person name="Gocayne J.D."/>
            <person name="Amanatides P.G."/>
            <person name="Scherer S.E."/>
            <person name="Li P.W."/>
            <person name="Hoskins R.A."/>
            <person name="Galle R.F."/>
            <person name="George R.A."/>
            <person name="Lewis S.E."/>
            <person name="Richards S."/>
            <person name="Ashburner M."/>
            <person name="Henderson S.N."/>
            <person name="Sutton G.G."/>
            <person name="Wortman J.R."/>
            <person name="Yandell M.D."/>
            <person name="Zhang Q."/>
            <person name="Chen L.X."/>
            <person name="Brandon R.C."/>
            <person name="Rogers Y.-H.C."/>
            <person name="Blazej R.G."/>
            <person name="Champe M."/>
            <person name="Pfeiffer B.D."/>
            <person name="Wan K.H."/>
            <person name="Doyle C."/>
            <person name="Baxter E.G."/>
            <person name="Helt G."/>
            <person name="Nelson C.R."/>
            <person name="Miklos G.L.G."/>
            <person name="Abril J.F."/>
            <person name="Agbayani A."/>
            <person name="An H.-J."/>
            <person name="Andrews-Pfannkoch C."/>
            <person name="Baldwin D."/>
            <person name="Ballew R.M."/>
            <person name="Basu A."/>
            <person name="Baxendale J."/>
            <person name="Bayraktaroglu L."/>
            <person name="Beasley E.M."/>
            <person name="Beeson K.Y."/>
            <person name="Benos P.V."/>
            <person name="Berman B.P."/>
            <person name="Bhandari D."/>
            <person name="Bolshakov S."/>
            <person name="Borkova D."/>
            <person name="Botchan M.R."/>
            <person name="Bouck J."/>
            <person name="Brokstein P."/>
            <person name="Brottier P."/>
            <person name="Burtis K.C."/>
            <person name="Busam D.A."/>
            <person name="Butler H."/>
            <person name="Cadieu E."/>
            <person name="Center A."/>
            <person name="Chandra I."/>
            <person name="Cherry J.M."/>
            <person name="Cawley S."/>
            <person name="Dahlke C."/>
            <person name="Davenport L.B."/>
            <person name="Davies P."/>
            <person name="de Pablos B."/>
            <person name="Delcher A."/>
            <person name="Deng Z."/>
            <person name="Mays A.D."/>
            <person name="Dew I."/>
            <person name="Dietz S.M."/>
            <person name="Dodson K."/>
            <person name="Doup L.E."/>
            <person name="Downes M."/>
            <person name="Dugan-Rocha S."/>
            <person name="Dunkov B.C."/>
            <person name="Dunn P."/>
            <person name="Durbin K.J."/>
            <person name="Evangelista C.C."/>
            <person name="Ferraz C."/>
            <person name="Ferriera S."/>
            <person name="Fleischmann W."/>
            <person name="Fosler C."/>
            <person name="Gabrielian A.E."/>
            <person name="Garg N.S."/>
            <person name="Gelbart W.M."/>
            <person name="Glasser K."/>
            <person name="Glodek A."/>
            <person name="Gong F."/>
            <person name="Gorrell J.H."/>
            <person name="Gu Z."/>
            <person name="Guan P."/>
            <person name="Harris M."/>
            <person name="Harris N.L."/>
            <person name="Harvey D.A."/>
            <person name="Heiman T.J."/>
            <person name="Hernandez J.R."/>
            <person name="Houck J."/>
            <person name="Hostin D."/>
            <person name="Houston K.A."/>
            <person name="Howland T.J."/>
            <person name="Wei M.-H."/>
            <person name="Ibegwam C."/>
            <person name="Jalali M."/>
            <person name="Kalush F."/>
            <person name="Karpen G.H."/>
            <person name="Ke Z."/>
            <person name="Kennison J.A."/>
            <person name="Ketchum K.A."/>
            <person name="Kimmel B.E."/>
            <person name="Kodira C.D."/>
            <person name="Kraft C.L."/>
            <person name="Kravitz S."/>
            <person name="Kulp D."/>
            <person name="Lai Z."/>
            <person name="Lasko P."/>
            <person name="Lei Y."/>
            <person name="Levitsky A.A."/>
            <person name="Li J.H."/>
            <person name="Li Z."/>
            <person name="Liang Y."/>
            <person name="Lin X."/>
            <person name="Liu X."/>
            <person name="Mattei B."/>
            <person name="McIntosh T.C."/>
            <person name="McLeod M.P."/>
            <person name="McPherson D."/>
            <person name="Merkulov G."/>
            <person name="Milshina N.V."/>
            <person name="Mobarry C."/>
            <person name="Morris J."/>
            <person name="Moshrefi A."/>
            <person name="Mount S.M."/>
            <person name="Moy M."/>
            <person name="Murphy B."/>
            <person name="Murphy L."/>
            <person name="Muzny D.M."/>
            <person name="Nelson D.L."/>
            <person name="Nelson D.R."/>
            <person name="Nelson K.A."/>
            <person name="Nixon K."/>
            <person name="Nusskern D.R."/>
            <person name="Pacleb J.M."/>
            <person name="Palazzolo M."/>
            <person name="Pittman G.S."/>
            <person name="Pan S."/>
            <person name="Pollard J."/>
            <person name="Puri V."/>
            <person name="Reese M.G."/>
            <person name="Reinert K."/>
            <person name="Remington K."/>
            <person name="Saunders R.D.C."/>
            <person name="Scheeler F."/>
            <person name="Shen H."/>
            <person name="Shue B.C."/>
            <person name="Siden-Kiamos I."/>
            <person name="Simpson M."/>
            <person name="Skupski M.P."/>
            <person name="Smith T.J."/>
            <person name="Spier E."/>
            <person name="Spradling A.C."/>
            <person name="Stapleton M."/>
            <person name="Strong R."/>
            <person name="Sun E."/>
            <person name="Svirskas R."/>
            <person name="Tector C."/>
            <person name="Turner R."/>
            <person name="Venter E."/>
            <person name="Wang A.H."/>
            <person name="Wang X."/>
            <person name="Wang Z.-Y."/>
            <person name="Wassarman D.A."/>
            <person name="Weinstock G.M."/>
            <person name="Weissenbach J."/>
            <person name="Williams S.M."/>
            <person name="Woodage T."/>
            <person name="Worley K.C."/>
            <person name="Wu D."/>
            <person name="Yang S."/>
            <person name="Yao Q.A."/>
            <person name="Ye J."/>
            <person name="Yeh R.-F."/>
            <person name="Zaveri J.S."/>
            <person name="Zhan M."/>
            <person name="Zhang G."/>
            <person name="Zhao Q."/>
            <person name="Zheng L."/>
            <person name="Zheng X.H."/>
            <person name="Zhong F.N."/>
            <person name="Zhong W."/>
            <person name="Zhou X."/>
            <person name="Zhu S.C."/>
            <person name="Zhu X."/>
            <person name="Smith H.O."/>
            <person name="Gibbs R.A."/>
            <person name="Myers E.W."/>
            <person name="Rubin G.M."/>
            <person name="Venter J.C."/>
        </authorList>
    </citation>
    <scope>NUCLEOTIDE SEQUENCE [LARGE SCALE GENOMIC DNA]</scope>
    <source>
        <strain>Berkeley</strain>
    </source>
</reference>
<reference key="2">
    <citation type="journal article" date="2002" name="Genome Biol.">
        <title>Annotation of the Drosophila melanogaster euchromatic genome: a systematic review.</title>
        <authorList>
            <person name="Misra S."/>
            <person name="Crosby M.A."/>
            <person name="Mungall C.J."/>
            <person name="Matthews B.B."/>
            <person name="Campbell K.S."/>
            <person name="Hradecky P."/>
            <person name="Huang Y."/>
            <person name="Kaminker J.S."/>
            <person name="Millburn G.H."/>
            <person name="Prochnik S.E."/>
            <person name="Smith C.D."/>
            <person name="Tupy J.L."/>
            <person name="Whitfield E.J."/>
            <person name="Bayraktaroglu L."/>
            <person name="Berman B.P."/>
            <person name="Bettencourt B.R."/>
            <person name="Celniker S.E."/>
            <person name="de Grey A.D.N.J."/>
            <person name="Drysdale R.A."/>
            <person name="Harris N.L."/>
            <person name="Richter J."/>
            <person name="Russo S."/>
            <person name="Schroeder A.J."/>
            <person name="Shu S.Q."/>
            <person name="Stapleton M."/>
            <person name="Yamada C."/>
            <person name="Ashburner M."/>
            <person name="Gelbart W.M."/>
            <person name="Rubin G.M."/>
            <person name="Lewis S.E."/>
        </authorList>
    </citation>
    <scope>GENOME REANNOTATION</scope>
    <source>
        <strain>Berkeley</strain>
    </source>
</reference>
<reference key="3">
    <citation type="journal article" date="2002" name="Genome Biol.">
        <title>A Drosophila full-length cDNA resource.</title>
        <authorList>
            <person name="Stapleton M."/>
            <person name="Carlson J.W."/>
            <person name="Brokstein P."/>
            <person name="Yu C."/>
            <person name="Champe M."/>
            <person name="George R.A."/>
            <person name="Guarin H."/>
            <person name="Kronmiller B."/>
            <person name="Pacleb J.M."/>
            <person name="Park S."/>
            <person name="Wan K.H."/>
            <person name="Rubin G.M."/>
            <person name="Celniker S.E."/>
        </authorList>
    </citation>
    <scope>NUCLEOTIDE SEQUENCE [LARGE SCALE MRNA]</scope>
    <source>
        <strain>Berkeley</strain>
        <tissue>Embryo</tissue>
    </source>
</reference>
<reference key="4">
    <citation type="journal article" date="2008" name="J. Proteome Res.">
        <title>Phosphoproteome analysis of Drosophila melanogaster embryos.</title>
        <authorList>
            <person name="Zhai B."/>
            <person name="Villen J."/>
            <person name="Beausoleil S.A."/>
            <person name="Mintseris J."/>
            <person name="Gygi S.P."/>
        </authorList>
    </citation>
    <scope>PHOSPHORYLATION [LARGE SCALE ANALYSIS] AT SER-187; THR-193 AND SER-198</scope>
    <scope>IDENTIFICATION BY MASS SPECTROMETRY</scope>
    <source>
        <tissue>Embryo</tissue>
    </source>
</reference>
<reference key="5">
    <citation type="journal article" date="2022" name="J. Cell Sci.">
        <title>Reduction of nucleolar NOC1 leads to the accumulation of pre-rRNAs and induces Xrp1, affecting growth and resulting in cell competition.</title>
        <authorList>
            <person name="Destefanis F."/>
            <person name="Manara V."/>
            <person name="Santarelli S."/>
            <person name="Zola S."/>
            <person name="Brambilla M."/>
            <person name="Viola G."/>
            <person name="Maragno P."/>
            <person name="Signoria I."/>
            <person name="Viero G."/>
            <person name="Pasini M.E."/>
            <person name="Penzo M."/>
            <person name="Bellosta P."/>
        </authorList>
    </citation>
    <scope>DISRUPTION PHENOTYPE</scope>
</reference>